<name>PA23_NAJNA</name>
<comment type="function">
    <text evidence="1">PLA2 catalyzes the calcium-dependent hydrolysis of the 2-acyl groups in 3-sn-phosphoglycerides.</text>
</comment>
<comment type="catalytic activity">
    <reaction evidence="2 3 4">
        <text>a 1,2-diacyl-sn-glycero-3-phosphocholine + H2O = a 1-acyl-sn-glycero-3-phosphocholine + a fatty acid + H(+)</text>
        <dbReference type="Rhea" id="RHEA:15801"/>
        <dbReference type="ChEBI" id="CHEBI:15377"/>
        <dbReference type="ChEBI" id="CHEBI:15378"/>
        <dbReference type="ChEBI" id="CHEBI:28868"/>
        <dbReference type="ChEBI" id="CHEBI:57643"/>
        <dbReference type="ChEBI" id="CHEBI:58168"/>
        <dbReference type="EC" id="3.1.1.4"/>
    </reaction>
</comment>
<comment type="cofactor">
    <cofactor evidence="1">
        <name>Ca(2+)</name>
        <dbReference type="ChEBI" id="CHEBI:29108"/>
    </cofactor>
    <text evidence="1">Binds 1 Ca(2+) ion.</text>
</comment>
<comment type="subcellular location">
    <subcellularLocation>
        <location evidence="5">Secreted</location>
    </subcellularLocation>
</comment>
<comment type="tissue specificity">
    <text evidence="5">Expressed by the venom gland.</text>
</comment>
<comment type="similarity">
    <text evidence="7">Belongs to the phospholipase A2 family. Group I subfamily.</text>
</comment>
<sequence>NLYQFKNMIQCTVPS</sequence>
<evidence type="ECO:0000250" key="1"/>
<evidence type="ECO:0000250" key="2">
    <source>
        <dbReference type="UniProtKB" id="P00598"/>
    </source>
</evidence>
<evidence type="ECO:0000255" key="3">
    <source>
        <dbReference type="PROSITE-ProRule" id="PRU10035"/>
    </source>
</evidence>
<evidence type="ECO:0000255" key="4">
    <source>
        <dbReference type="PROSITE-ProRule" id="PRU10036"/>
    </source>
</evidence>
<evidence type="ECO:0000269" key="5">
    <source>
    </source>
</evidence>
<evidence type="ECO:0000303" key="6">
    <source>
    </source>
</evidence>
<evidence type="ECO:0000305" key="7"/>
<proteinExistence type="evidence at protein level"/>
<feature type="chain" id="PRO_0000394694" description="Phospholipase A2 3">
    <location>
        <begin position="1"/>
        <end position="15" status="greater than"/>
    </location>
</feature>
<feature type="disulfide bond" evidence="2">
    <location>
        <begin position="11"/>
        <end status="unknown"/>
    </location>
</feature>
<feature type="non-terminal residue" evidence="6">
    <location>
        <position position="15"/>
    </location>
</feature>
<protein>
    <recommendedName>
        <fullName evidence="6">Phospholipase A2 3</fullName>
        <shortName evidence="6">PLA23</shortName>
        <shortName>svPLA2</shortName>
        <ecNumber>3.1.1.4</ecNumber>
    </recommendedName>
    <alternativeName>
        <fullName evidence="2">Phosphatidylcholine 2-acylhydrolase</fullName>
    </alternativeName>
</protein>
<reference evidence="7" key="1">
    <citation type="journal article" date="2010" name="Biomed. Res.">
        <title>Molecular diversity in venom proteins of the Russell's viper (Daboia russellii russellii) and the Indian cobra (Naja naja) in Sri Lanka.</title>
        <authorList>
            <person name="Suzuki M."/>
            <person name="Itoh T."/>
            <person name="Bandaranayake B.M.A.I.K."/>
            <person name="Ranasinghe J.G."/>
            <person name="Athauda S.B."/>
            <person name="Moriyama A."/>
        </authorList>
    </citation>
    <scope>PROTEIN SEQUENCE</scope>
    <scope>SUBCELLULAR LOCATION</scope>
    <scope>TISSUE SPECIFICITY</scope>
    <source>
        <tissue evidence="5">Venom</tissue>
    </source>
</reference>
<accession>P86542</accession>
<keyword id="KW-0106">Calcium</keyword>
<keyword id="KW-0903">Direct protein sequencing</keyword>
<keyword id="KW-1015">Disulfide bond</keyword>
<keyword id="KW-0378">Hydrolase</keyword>
<keyword id="KW-0442">Lipid degradation</keyword>
<keyword id="KW-0443">Lipid metabolism</keyword>
<keyword id="KW-0479">Metal-binding</keyword>
<keyword id="KW-1185">Reference proteome</keyword>
<keyword id="KW-0964">Secreted</keyword>
<dbReference type="EC" id="3.1.1.4"/>
<dbReference type="Proteomes" id="UP000694559">
    <property type="component" value="Unplaced"/>
</dbReference>
<dbReference type="GO" id="GO:0005576">
    <property type="term" value="C:extracellular region"/>
    <property type="evidence" value="ECO:0007669"/>
    <property type="project" value="UniProtKB-SubCell"/>
</dbReference>
<dbReference type="GO" id="GO:0046872">
    <property type="term" value="F:metal ion binding"/>
    <property type="evidence" value="ECO:0007669"/>
    <property type="project" value="UniProtKB-KW"/>
</dbReference>
<dbReference type="GO" id="GO:0004623">
    <property type="term" value="F:phospholipase A2 activity"/>
    <property type="evidence" value="ECO:0007669"/>
    <property type="project" value="UniProtKB-EC"/>
</dbReference>
<dbReference type="GO" id="GO:0016042">
    <property type="term" value="P:lipid catabolic process"/>
    <property type="evidence" value="ECO:0007669"/>
    <property type="project" value="UniProtKB-KW"/>
</dbReference>
<organism>
    <name type="scientific">Naja naja</name>
    <name type="common">Indian cobra</name>
    <dbReference type="NCBI Taxonomy" id="35670"/>
    <lineage>
        <taxon>Eukaryota</taxon>
        <taxon>Metazoa</taxon>
        <taxon>Chordata</taxon>
        <taxon>Craniata</taxon>
        <taxon>Vertebrata</taxon>
        <taxon>Euteleostomi</taxon>
        <taxon>Lepidosauria</taxon>
        <taxon>Squamata</taxon>
        <taxon>Bifurcata</taxon>
        <taxon>Unidentata</taxon>
        <taxon>Episquamata</taxon>
        <taxon>Toxicofera</taxon>
        <taxon>Serpentes</taxon>
        <taxon>Colubroidea</taxon>
        <taxon>Elapidae</taxon>
        <taxon>Elapinae</taxon>
        <taxon>Naja</taxon>
    </lineage>
</organism>